<sequence length="456" mass="51034">MAEAEAEAAGAGAGAGPARRTTRVGRYELGKTIGEGSFAKVKVARDTRTGDTLAIKVLDRNHVLRHKMVEQIKREISTMKLIKHPNVVQLHEVMASKSKIYMVLEYVDGGELFDKIVNSGRLGEDEARRYFHQLINAVDYCHSRGVYHRDLKPENLLLDSHGALKVSDFGLSAFAPQTKEDGLLHTACGTPNYVAPEVLADKGYDGMAADVWSCGIILFVLMAGYLPFDDPNLMTLYKLICKAKVSCPHWFSSGAKKFIKRILDPNPCTRITIAQILEDDWFKKDYKPPLFEQGEDVSLDDVDAAFDCSEENLVAEKREKPESMNAFALISRSQGFNLGNLFEKEMMGMVKRETSFTSQCTPQEIMSKIEEACGPLGFNVRKQNYKMKLKGDKTGRKGYLSVATEVFEVAPSLHMVELRKTGGDTLEFHNFYNNFSSELKDIVWKSESDAKAAKKR</sequence>
<accession>Q10SC8</accession>
<accession>Q8S5V9</accession>
<evidence type="ECO:0000250" key="1"/>
<evidence type="ECO:0000255" key="2">
    <source>
        <dbReference type="PROSITE-ProRule" id="PRU00159"/>
    </source>
</evidence>
<evidence type="ECO:0000255" key="3">
    <source>
        <dbReference type="PROSITE-ProRule" id="PRU00256"/>
    </source>
</evidence>
<evidence type="ECO:0000255" key="4">
    <source>
        <dbReference type="PROSITE-ProRule" id="PRU10027"/>
    </source>
</evidence>
<evidence type="ECO:0000269" key="5">
    <source>
    </source>
</evidence>
<evidence type="ECO:0000305" key="6"/>
<name>CIPK9_ORYSJ</name>
<comment type="function">
    <text evidence="1">CIPK serine-threonine protein kinases interact with CBL proteins. Binding of a CBL protein to the regulatory NAF domain of CIPK protein lead to the activation of the kinase in a calcium-dependent manner (By similarity).</text>
</comment>
<comment type="catalytic activity">
    <reaction>
        <text>L-seryl-[protein] + ATP = O-phospho-L-seryl-[protein] + ADP + H(+)</text>
        <dbReference type="Rhea" id="RHEA:17989"/>
        <dbReference type="Rhea" id="RHEA-COMP:9863"/>
        <dbReference type="Rhea" id="RHEA-COMP:11604"/>
        <dbReference type="ChEBI" id="CHEBI:15378"/>
        <dbReference type="ChEBI" id="CHEBI:29999"/>
        <dbReference type="ChEBI" id="CHEBI:30616"/>
        <dbReference type="ChEBI" id="CHEBI:83421"/>
        <dbReference type="ChEBI" id="CHEBI:456216"/>
        <dbReference type="EC" id="2.7.11.1"/>
    </reaction>
</comment>
<comment type="catalytic activity">
    <reaction>
        <text>L-threonyl-[protein] + ATP = O-phospho-L-threonyl-[protein] + ADP + H(+)</text>
        <dbReference type="Rhea" id="RHEA:46608"/>
        <dbReference type="Rhea" id="RHEA-COMP:11060"/>
        <dbReference type="Rhea" id="RHEA-COMP:11605"/>
        <dbReference type="ChEBI" id="CHEBI:15378"/>
        <dbReference type="ChEBI" id="CHEBI:30013"/>
        <dbReference type="ChEBI" id="CHEBI:30616"/>
        <dbReference type="ChEBI" id="CHEBI:61977"/>
        <dbReference type="ChEBI" id="CHEBI:456216"/>
        <dbReference type="EC" id="2.7.11.1"/>
    </reaction>
</comment>
<comment type="cofactor">
    <cofactor evidence="1">
        <name>Mn(2+)</name>
        <dbReference type="ChEBI" id="CHEBI:29035"/>
    </cofactor>
</comment>
<comment type="induction">
    <text evidence="5">By drought and salt stresses.</text>
</comment>
<comment type="domain">
    <text evidence="1">The activation loop within the kinase domain is the target of phosphorylation/activation by upstream protein kinases. The PPI motif mediates the interaction with the ABI (abscisic acid-insensitive) phosphatases (By similarity).</text>
</comment>
<comment type="similarity">
    <text evidence="6">Belongs to the protein kinase superfamily. CAMK Ser/Thr protein kinase family. SNF1 subfamily.</text>
</comment>
<comment type="sequence caution" evidence="6">
    <conflict type="erroneous gene model prediction">
        <sequence resource="EMBL-CDS" id="AAM19110"/>
    </conflict>
</comment>
<comment type="sequence caution" evidence="6">
    <conflict type="erroneous gene model prediction">
        <sequence resource="EMBL-CDS" id="BAF10742"/>
    </conflict>
</comment>
<dbReference type="EC" id="2.7.11.1"/>
<dbReference type="EMBL" id="AC104427">
    <property type="protein sequence ID" value="AAM19110.1"/>
    <property type="status" value="ALT_SEQ"/>
    <property type="molecule type" value="Genomic_DNA"/>
</dbReference>
<dbReference type="EMBL" id="DP000009">
    <property type="protein sequence ID" value="ABF93761.1"/>
    <property type="molecule type" value="Genomic_DNA"/>
</dbReference>
<dbReference type="EMBL" id="AP008209">
    <property type="protein sequence ID" value="BAF10742.2"/>
    <property type="status" value="ALT_SEQ"/>
    <property type="molecule type" value="Genomic_DNA"/>
</dbReference>
<dbReference type="EMBL" id="AP014959">
    <property type="status" value="NOT_ANNOTATED_CDS"/>
    <property type="molecule type" value="Genomic_DNA"/>
</dbReference>
<dbReference type="EMBL" id="CM000140">
    <property type="status" value="NOT_ANNOTATED_CDS"/>
    <property type="molecule type" value="Genomic_DNA"/>
</dbReference>
<dbReference type="RefSeq" id="XP_015630713.1">
    <property type="nucleotide sequence ID" value="XM_015775227.1"/>
</dbReference>
<dbReference type="SMR" id="Q10SC8"/>
<dbReference type="FunCoup" id="Q10SC8">
    <property type="interactions" value="555"/>
</dbReference>
<dbReference type="STRING" id="39947.Q10SC8"/>
<dbReference type="PaxDb" id="39947-Q10SC8"/>
<dbReference type="EnsemblPlants" id="Os03t0126800-01">
    <property type="protein sequence ID" value="Os03t0126800-01"/>
    <property type="gene ID" value="Os03g0126800"/>
</dbReference>
<dbReference type="Gramene" id="Os03t0126800-01">
    <property type="protein sequence ID" value="Os03t0126800-01"/>
    <property type="gene ID" value="Os03g0126800"/>
</dbReference>
<dbReference type="KEGG" id="dosa:Os03g0126800"/>
<dbReference type="eggNOG" id="KOG0583">
    <property type="taxonomic scope" value="Eukaryota"/>
</dbReference>
<dbReference type="InParanoid" id="Q10SC8"/>
<dbReference type="OrthoDB" id="193931at2759"/>
<dbReference type="Proteomes" id="UP000000763">
    <property type="component" value="Chromosome 3"/>
</dbReference>
<dbReference type="Proteomes" id="UP000007752">
    <property type="component" value="Chromosome 3"/>
</dbReference>
<dbReference type="Proteomes" id="UP000059680">
    <property type="component" value="Chromosome 3"/>
</dbReference>
<dbReference type="GO" id="GO:0005524">
    <property type="term" value="F:ATP binding"/>
    <property type="evidence" value="ECO:0007669"/>
    <property type="project" value="UniProtKB-KW"/>
</dbReference>
<dbReference type="GO" id="GO:0106310">
    <property type="term" value="F:protein serine kinase activity"/>
    <property type="evidence" value="ECO:0007669"/>
    <property type="project" value="RHEA"/>
</dbReference>
<dbReference type="GO" id="GO:0004674">
    <property type="term" value="F:protein serine/threonine kinase activity"/>
    <property type="evidence" value="ECO:0000318"/>
    <property type="project" value="GO_Central"/>
</dbReference>
<dbReference type="GO" id="GO:0007165">
    <property type="term" value="P:signal transduction"/>
    <property type="evidence" value="ECO:0000318"/>
    <property type="project" value="GO_Central"/>
</dbReference>
<dbReference type="CDD" id="cd12195">
    <property type="entry name" value="CIPK_C"/>
    <property type="match status" value="1"/>
</dbReference>
<dbReference type="CDD" id="cd14663">
    <property type="entry name" value="STKc_SnRK3"/>
    <property type="match status" value="1"/>
</dbReference>
<dbReference type="FunFam" id="1.10.510.10:FF:000279">
    <property type="entry name" value="Non-specific serine/threonine protein kinase"/>
    <property type="match status" value="1"/>
</dbReference>
<dbReference type="FunFam" id="3.30.200.20:FF:000096">
    <property type="entry name" value="Non-specific serine/threonine protein kinase"/>
    <property type="match status" value="1"/>
</dbReference>
<dbReference type="FunFam" id="3.30.310.80:FF:000002">
    <property type="entry name" value="Non-specific serine/threonine protein kinase"/>
    <property type="match status" value="1"/>
</dbReference>
<dbReference type="Gene3D" id="3.30.310.80">
    <property type="entry name" value="Kinase associated domain 1, KA1"/>
    <property type="match status" value="1"/>
</dbReference>
<dbReference type="Gene3D" id="3.30.200.20">
    <property type="entry name" value="Phosphorylase Kinase, domain 1"/>
    <property type="match status" value="1"/>
</dbReference>
<dbReference type="Gene3D" id="1.10.510.10">
    <property type="entry name" value="Transferase(Phosphotransferase) domain 1"/>
    <property type="match status" value="1"/>
</dbReference>
<dbReference type="InterPro" id="IPR011009">
    <property type="entry name" value="Kinase-like_dom_sf"/>
</dbReference>
<dbReference type="InterPro" id="IPR018451">
    <property type="entry name" value="NAF/FISL_domain"/>
</dbReference>
<dbReference type="InterPro" id="IPR004041">
    <property type="entry name" value="NAF_dom"/>
</dbReference>
<dbReference type="InterPro" id="IPR000719">
    <property type="entry name" value="Prot_kinase_dom"/>
</dbReference>
<dbReference type="InterPro" id="IPR017441">
    <property type="entry name" value="Protein_kinase_ATP_BS"/>
</dbReference>
<dbReference type="InterPro" id="IPR008271">
    <property type="entry name" value="Ser/Thr_kinase_AS"/>
</dbReference>
<dbReference type="PANTHER" id="PTHR43895">
    <property type="entry name" value="CALCIUM/CALMODULIN-DEPENDENT PROTEIN KINASE KINASE-RELATED"/>
    <property type="match status" value="1"/>
</dbReference>
<dbReference type="PANTHER" id="PTHR43895:SF145">
    <property type="entry name" value="CBL-INTERACTING SERINE_THREONINE-PROTEIN KINASE 9"/>
    <property type="match status" value="1"/>
</dbReference>
<dbReference type="Pfam" id="PF03822">
    <property type="entry name" value="NAF"/>
    <property type="match status" value="1"/>
</dbReference>
<dbReference type="Pfam" id="PF00069">
    <property type="entry name" value="Pkinase"/>
    <property type="match status" value="1"/>
</dbReference>
<dbReference type="SMART" id="SM00220">
    <property type="entry name" value="S_TKc"/>
    <property type="match status" value="1"/>
</dbReference>
<dbReference type="SUPFAM" id="SSF56112">
    <property type="entry name" value="Protein kinase-like (PK-like)"/>
    <property type="match status" value="1"/>
</dbReference>
<dbReference type="PROSITE" id="PS50816">
    <property type="entry name" value="NAF"/>
    <property type="match status" value="1"/>
</dbReference>
<dbReference type="PROSITE" id="PS00107">
    <property type="entry name" value="PROTEIN_KINASE_ATP"/>
    <property type="match status" value="1"/>
</dbReference>
<dbReference type="PROSITE" id="PS50011">
    <property type="entry name" value="PROTEIN_KINASE_DOM"/>
    <property type="match status" value="1"/>
</dbReference>
<dbReference type="PROSITE" id="PS00108">
    <property type="entry name" value="PROTEIN_KINASE_ST"/>
    <property type="match status" value="1"/>
</dbReference>
<proteinExistence type="evidence at transcript level"/>
<feature type="chain" id="PRO_0000338367" description="CBL-interacting protein kinase 9">
    <location>
        <begin position="1"/>
        <end position="456"/>
    </location>
</feature>
<feature type="domain" description="Protein kinase" evidence="2">
    <location>
        <begin position="27"/>
        <end position="282"/>
    </location>
</feature>
<feature type="domain" description="NAF" evidence="3">
    <location>
        <begin position="318"/>
        <end position="343"/>
    </location>
</feature>
<feature type="region of interest" description="Activation loop" evidence="1">
    <location>
        <begin position="168"/>
        <end position="197"/>
    </location>
</feature>
<feature type="region of interest" description="PPI" evidence="1">
    <location>
        <begin position="351"/>
        <end position="380"/>
    </location>
</feature>
<feature type="active site" description="Proton acceptor" evidence="2 4">
    <location>
        <position position="150"/>
    </location>
</feature>
<feature type="binding site" evidence="2">
    <location>
        <begin position="33"/>
        <end position="41"/>
    </location>
    <ligand>
        <name>ATP</name>
        <dbReference type="ChEBI" id="CHEBI:30616"/>
    </ligand>
</feature>
<feature type="binding site" evidence="2">
    <location>
        <position position="56"/>
    </location>
    <ligand>
        <name>ATP</name>
        <dbReference type="ChEBI" id="CHEBI:30616"/>
    </ligand>
</feature>
<gene>
    <name type="primary">CIPK9</name>
    <name type="ordered locus">Os03g0126800</name>
    <name type="ordered locus">LOC_Os03g03510</name>
    <name type="ORF">OJ1015F07.8</name>
    <name type="ORF">OsJ_008917</name>
</gene>
<protein>
    <recommendedName>
        <fullName>CBL-interacting protein kinase 9</fullName>
        <ecNumber>2.7.11.1</ecNumber>
    </recommendedName>
    <alternativeName>
        <fullName>OsCIPK09</fullName>
    </alternativeName>
</protein>
<organism>
    <name type="scientific">Oryza sativa subsp. japonica</name>
    <name type="common">Rice</name>
    <dbReference type="NCBI Taxonomy" id="39947"/>
    <lineage>
        <taxon>Eukaryota</taxon>
        <taxon>Viridiplantae</taxon>
        <taxon>Streptophyta</taxon>
        <taxon>Embryophyta</taxon>
        <taxon>Tracheophyta</taxon>
        <taxon>Spermatophyta</taxon>
        <taxon>Magnoliopsida</taxon>
        <taxon>Liliopsida</taxon>
        <taxon>Poales</taxon>
        <taxon>Poaceae</taxon>
        <taxon>BOP clade</taxon>
        <taxon>Oryzoideae</taxon>
        <taxon>Oryzeae</taxon>
        <taxon>Oryzinae</taxon>
        <taxon>Oryza</taxon>
        <taxon>Oryza sativa</taxon>
    </lineage>
</organism>
<keyword id="KW-0067">ATP-binding</keyword>
<keyword id="KW-0418">Kinase</keyword>
<keyword id="KW-0464">Manganese</keyword>
<keyword id="KW-0547">Nucleotide-binding</keyword>
<keyword id="KW-1185">Reference proteome</keyword>
<keyword id="KW-0723">Serine/threonine-protein kinase</keyword>
<keyword id="KW-0808">Transferase</keyword>
<reference key="1">
    <citation type="journal article" date="2005" name="Genome Res.">
        <title>Sequence, annotation, and analysis of synteny between rice chromosome 3 and diverged grass species.</title>
        <authorList>
            <consortium name="The rice chromosome 3 sequencing consortium"/>
            <person name="Buell C.R."/>
            <person name="Yuan Q."/>
            <person name="Ouyang S."/>
            <person name="Liu J."/>
            <person name="Zhu W."/>
            <person name="Wang A."/>
            <person name="Maiti R."/>
            <person name="Haas B."/>
            <person name="Wortman J."/>
            <person name="Pertea M."/>
            <person name="Jones K.M."/>
            <person name="Kim M."/>
            <person name="Overton L."/>
            <person name="Tsitrin T."/>
            <person name="Fadrosh D."/>
            <person name="Bera J."/>
            <person name="Weaver B."/>
            <person name="Jin S."/>
            <person name="Johri S."/>
            <person name="Reardon M."/>
            <person name="Webb K."/>
            <person name="Hill J."/>
            <person name="Moffat K."/>
            <person name="Tallon L."/>
            <person name="Van Aken S."/>
            <person name="Lewis M."/>
            <person name="Utterback T."/>
            <person name="Feldblyum T."/>
            <person name="Zismann V."/>
            <person name="Iobst S."/>
            <person name="Hsiao J."/>
            <person name="de Vazeille A.R."/>
            <person name="Salzberg S.L."/>
            <person name="White O."/>
            <person name="Fraser C.M."/>
            <person name="Yu Y."/>
            <person name="Kim H."/>
            <person name="Rambo T."/>
            <person name="Currie J."/>
            <person name="Collura K."/>
            <person name="Kernodle-Thompson S."/>
            <person name="Wei F."/>
            <person name="Kudrna K."/>
            <person name="Ammiraju J.S.S."/>
            <person name="Luo M."/>
            <person name="Goicoechea J.L."/>
            <person name="Wing R.A."/>
            <person name="Henry D."/>
            <person name="Oates R."/>
            <person name="Palmer M."/>
            <person name="Pries G."/>
            <person name="Saski C."/>
            <person name="Simmons J."/>
            <person name="Soderlund C."/>
            <person name="Nelson W."/>
            <person name="de la Bastide M."/>
            <person name="Spiegel L."/>
            <person name="Nascimento L."/>
            <person name="Huang E."/>
            <person name="Preston R."/>
            <person name="Zutavern T."/>
            <person name="Palmer L."/>
            <person name="O'Shaughnessy A."/>
            <person name="Dike S."/>
            <person name="McCombie W.R."/>
            <person name="Minx P."/>
            <person name="Cordum H."/>
            <person name="Wilson R."/>
            <person name="Jin W."/>
            <person name="Lee H.R."/>
            <person name="Jiang J."/>
            <person name="Jackson S."/>
        </authorList>
    </citation>
    <scope>NUCLEOTIDE SEQUENCE [LARGE SCALE GENOMIC DNA]</scope>
    <source>
        <strain>cv. Nipponbare</strain>
    </source>
</reference>
<reference key="2">
    <citation type="journal article" date="2005" name="Nature">
        <title>The map-based sequence of the rice genome.</title>
        <authorList>
            <consortium name="International rice genome sequencing project (IRGSP)"/>
        </authorList>
    </citation>
    <scope>NUCLEOTIDE SEQUENCE [LARGE SCALE GENOMIC DNA]</scope>
    <source>
        <strain>cv. Nipponbare</strain>
    </source>
</reference>
<reference key="3">
    <citation type="journal article" date="2008" name="Nucleic Acids Res.">
        <title>The rice annotation project database (RAP-DB): 2008 update.</title>
        <authorList>
            <consortium name="The rice annotation project (RAP)"/>
        </authorList>
    </citation>
    <scope>GENOME REANNOTATION</scope>
    <source>
        <strain>cv. Nipponbare</strain>
    </source>
</reference>
<reference key="4">
    <citation type="journal article" date="2013" name="Rice">
        <title>Improvement of the Oryza sativa Nipponbare reference genome using next generation sequence and optical map data.</title>
        <authorList>
            <person name="Kawahara Y."/>
            <person name="de la Bastide M."/>
            <person name="Hamilton J.P."/>
            <person name="Kanamori H."/>
            <person name="McCombie W.R."/>
            <person name="Ouyang S."/>
            <person name="Schwartz D.C."/>
            <person name="Tanaka T."/>
            <person name="Wu J."/>
            <person name="Zhou S."/>
            <person name="Childs K.L."/>
            <person name="Davidson R.M."/>
            <person name="Lin H."/>
            <person name="Quesada-Ocampo L."/>
            <person name="Vaillancourt B."/>
            <person name="Sakai H."/>
            <person name="Lee S.S."/>
            <person name="Kim J."/>
            <person name="Numa H."/>
            <person name="Itoh T."/>
            <person name="Buell C.R."/>
            <person name="Matsumoto T."/>
        </authorList>
    </citation>
    <scope>GENOME REANNOTATION</scope>
    <source>
        <strain>cv. Nipponbare</strain>
    </source>
</reference>
<reference key="5">
    <citation type="journal article" date="2005" name="PLoS Biol.">
        <title>The genomes of Oryza sativa: a history of duplications.</title>
        <authorList>
            <person name="Yu J."/>
            <person name="Wang J."/>
            <person name="Lin W."/>
            <person name="Li S."/>
            <person name="Li H."/>
            <person name="Zhou J."/>
            <person name="Ni P."/>
            <person name="Dong W."/>
            <person name="Hu S."/>
            <person name="Zeng C."/>
            <person name="Zhang J."/>
            <person name="Zhang Y."/>
            <person name="Li R."/>
            <person name="Xu Z."/>
            <person name="Li S."/>
            <person name="Li X."/>
            <person name="Zheng H."/>
            <person name="Cong L."/>
            <person name="Lin L."/>
            <person name="Yin J."/>
            <person name="Geng J."/>
            <person name="Li G."/>
            <person name="Shi J."/>
            <person name="Liu J."/>
            <person name="Lv H."/>
            <person name="Li J."/>
            <person name="Wang J."/>
            <person name="Deng Y."/>
            <person name="Ran L."/>
            <person name="Shi X."/>
            <person name="Wang X."/>
            <person name="Wu Q."/>
            <person name="Li C."/>
            <person name="Ren X."/>
            <person name="Wang J."/>
            <person name="Wang X."/>
            <person name="Li D."/>
            <person name="Liu D."/>
            <person name="Zhang X."/>
            <person name="Ji Z."/>
            <person name="Zhao W."/>
            <person name="Sun Y."/>
            <person name="Zhang Z."/>
            <person name="Bao J."/>
            <person name="Han Y."/>
            <person name="Dong L."/>
            <person name="Ji J."/>
            <person name="Chen P."/>
            <person name="Wu S."/>
            <person name="Liu J."/>
            <person name="Xiao Y."/>
            <person name="Bu D."/>
            <person name="Tan J."/>
            <person name="Yang L."/>
            <person name="Ye C."/>
            <person name="Zhang J."/>
            <person name="Xu J."/>
            <person name="Zhou Y."/>
            <person name="Yu Y."/>
            <person name="Zhang B."/>
            <person name="Zhuang S."/>
            <person name="Wei H."/>
            <person name="Liu B."/>
            <person name="Lei M."/>
            <person name="Yu H."/>
            <person name="Li Y."/>
            <person name="Xu H."/>
            <person name="Wei S."/>
            <person name="He X."/>
            <person name="Fang L."/>
            <person name="Zhang Z."/>
            <person name="Zhang Y."/>
            <person name="Huang X."/>
            <person name="Su Z."/>
            <person name="Tong W."/>
            <person name="Li J."/>
            <person name="Tong Z."/>
            <person name="Li S."/>
            <person name="Ye J."/>
            <person name="Wang L."/>
            <person name="Fang L."/>
            <person name="Lei T."/>
            <person name="Chen C.-S."/>
            <person name="Chen H.-C."/>
            <person name="Xu Z."/>
            <person name="Li H."/>
            <person name="Huang H."/>
            <person name="Zhang F."/>
            <person name="Xu H."/>
            <person name="Li N."/>
            <person name="Zhao C."/>
            <person name="Li S."/>
            <person name="Dong L."/>
            <person name="Huang Y."/>
            <person name="Li L."/>
            <person name="Xi Y."/>
            <person name="Qi Q."/>
            <person name="Li W."/>
            <person name="Zhang B."/>
            <person name="Hu W."/>
            <person name="Zhang Y."/>
            <person name="Tian X."/>
            <person name="Jiao Y."/>
            <person name="Liang X."/>
            <person name="Jin J."/>
            <person name="Gao L."/>
            <person name="Zheng W."/>
            <person name="Hao B."/>
            <person name="Liu S.-M."/>
            <person name="Wang W."/>
            <person name="Yuan L."/>
            <person name="Cao M."/>
            <person name="McDermott J."/>
            <person name="Samudrala R."/>
            <person name="Wang J."/>
            <person name="Wong G.K.-S."/>
            <person name="Yang H."/>
        </authorList>
    </citation>
    <scope>NUCLEOTIDE SEQUENCE [LARGE SCALE GENOMIC DNA]</scope>
    <source>
        <strain>cv. Nipponbare</strain>
    </source>
</reference>
<reference key="6">
    <citation type="journal article" date="2004" name="Plant Physiol.">
        <title>Calcium sensors and their interacting protein kinases: genomics of the Arabidopsis and rice CBL-CIPK signaling networks.</title>
        <authorList>
            <person name="Kolukisaoglu U."/>
            <person name="Weinl S."/>
            <person name="Blazevic D."/>
            <person name="Batistic O."/>
            <person name="Kudla J."/>
        </authorList>
    </citation>
    <scope>GENE FAMILY</scope>
    <scope>NOMENCLATURE</scope>
</reference>
<reference key="7">
    <citation type="journal article" date="2007" name="Plant Physiol.">
        <title>Characterization of stress-responsive CIPK genes in rice for stress tolerance improvement.</title>
        <authorList>
            <person name="Xiang Y."/>
            <person name="Huang Y."/>
            <person name="Xiong L."/>
        </authorList>
    </citation>
    <scope>INDUCTION</scope>
</reference>